<keyword id="KW-0342">GTP-binding</keyword>
<keyword id="KW-0396">Initiation factor</keyword>
<keyword id="KW-0547">Nucleotide-binding</keyword>
<keyword id="KW-0648">Protein biosynthesis</keyword>
<accession>A9A813</accession>
<dbReference type="EMBL" id="CP000867">
    <property type="protein sequence ID" value="ABX01486.1"/>
    <property type="molecule type" value="Genomic_DNA"/>
</dbReference>
<dbReference type="SMR" id="A9A813"/>
<dbReference type="STRING" id="444158.MmarC6_0669"/>
<dbReference type="KEGG" id="mmx:MmarC6_0669"/>
<dbReference type="eggNOG" id="arCOG01560">
    <property type="taxonomic scope" value="Archaea"/>
</dbReference>
<dbReference type="HOGENOM" id="CLU_002656_3_3_2"/>
<dbReference type="OrthoDB" id="30957at2157"/>
<dbReference type="PhylomeDB" id="A9A813"/>
<dbReference type="GO" id="GO:0005737">
    <property type="term" value="C:cytoplasm"/>
    <property type="evidence" value="ECO:0007669"/>
    <property type="project" value="TreeGrafter"/>
</dbReference>
<dbReference type="GO" id="GO:0005525">
    <property type="term" value="F:GTP binding"/>
    <property type="evidence" value="ECO:0007669"/>
    <property type="project" value="UniProtKB-KW"/>
</dbReference>
<dbReference type="GO" id="GO:0003924">
    <property type="term" value="F:GTPase activity"/>
    <property type="evidence" value="ECO:0007669"/>
    <property type="project" value="UniProtKB-UniRule"/>
</dbReference>
<dbReference type="GO" id="GO:0003743">
    <property type="term" value="F:translation initiation factor activity"/>
    <property type="evidence" value="ECO:0007669"/>
    <property type="project" value="UniProtKB-UniRule"/>
</dbReference>
<dbReference type="CDD" id="cd03703">
    <property type="entry name" value="aeIF5B_II"/>
    <property type="match status" value="1"/>
</dbReference>
<dbReference type="CDD" id="cd16266">
    <property type="entry name" value="IF2_aeIF5B_IV"/>
    <property type="match status" value="1"/>
</dbReference>
<dbReference type="CDD" id="cd01887">
    <property type="entry name" value="IF2_eIF5B"/>
    <property type="match status" value="1"/>
</dbReference>
<dbReference type="FunFam" id="3.40.50.300:FF:000112">
    <property type="entry name" value="Eukaryotic translation initiation factor 5B"/>
    <property type="match status" value="1"/>
</dbReference>
<dbReference type="FunFam" id="3.40.50.10050:FF:000001">
    <property type="entry name" value="Translation initiation factor IF-2"/>
    <property type="match status" value="1"/>
</dbReference>
<dbReference type="Gene3D" id="3.40.50.300">
    <property type="entry name" value="P-loop containing nucleotide triphosphate hydrolases"/>
    <property type="match status" value="1"/>
</dbReference>
<dbReference type="Gene3D" id="2.40.30.10">
    <property type="entry name" value="Translation factors"/>
    <property type="match status" value="2"/>
</dbReference>
<dbReference type="Gene3D" id="3.40.50.10050">
    <property type="entry name" value="Translation initiation factor IF- 2, domain 3"/>
    <property type="match status" value="1"/>
</dbReference>
<dbReference type="HAMAP" id="MF_00100_A">
    <property type="entry name" value="IF_2_A"/>
    <property type="match status" value="1"/>
</dbReference>
<dbReference type="InterPro" id="IPR029459">
    <property type="entry name" value="EFTU-type"/>
</dbReference>
<dbReference type="InterPro" id="IPR027417">
    <property type="entry name" value="P-loop_NTPase"/>
</dbReference>
<dbReference type="InterPro" id="IPR005225">
    <property type="entry name" value="Small_GTP-bd"/>
</dbReference>
<dbReference type="InterPro" id="IPR000795">
    <property type="entry name" value="T_Tr_GTP-bd_dom"/>
</dbReference>
<dbReference type="InterPro" id="IPR004544">
    <property type="entry name" value="TF_aIF-2_arc"/>
</dbReference>
<dbReference type="InterPro" id="IPR015760">
    <property type="entry name" value="TIF_IF2"/>
</dbReference>
<dbReference type="InterPro" id="IPR023115">
    <property type="entry name" value="TIF_IF2_dom3"/>
</dbReference>
<dbReference type="InterPro" id="IPR036925">
    <property type="entry name" value="TIF_IF2_dom3_sf"/>
</dbReference>
<dbReference type="InterPro" id="IPR009000">
    <property type="entry name" value="Transl_B-barrel_sf"/>
</dbReference>
<dbReference type="NCBIfam" id="TIGR00491">
    <property type="entry name" value="aIF-2"/>
    <property type="match status" value="1"/>
</dbReference>
<dbReference type="NCBIfam" id="NF003078">
    <property type="entry name" value="PRK04004.1"/>
    <property type="match status" value="1"/>
</dbReference>
<dbReference type="NCBIfam" id="NF011418">
    <property type="entry name" value="PRK14845.1"/>
    <property type="match status" value="1"/>
</dbReference>
<dbReference type="NCBIfam" id="TIGR00231">
    <property type="entry name" value="small_GTP"/>
    <property type="match status" value="1"/>
</dbReference>
<dbReference type="PANTHER" id="PTHR43381:SF4">
    <property type="entry name" value="EUKARYOTIC TRANSLATION INITIATION FACTOR 5B"/>
    <property type="match status" value="1"/>
</dbReference>
<dbReference type="PANTHER" id="PTHR43381">
    <property type="entry name" value="TRANSLATION INITIATION FACTOR IF-2-RELATED"/>
    <property type="match status" value="1"/>
</dbReference>
<dbReference type="Pfam" id="PF00009">
    <property type="entry name" value="GTP_EFTU"/>
    <property type="match status" value="1"/>
</dbReference>
<dbReference type="Pfam" id="PF14578">
    <property type="entry name" value="GTP_EFTU_D4"/>
    <property type="match status" value="1"/>
</dbReference>
<dbReference type="Pfam" id="PF11987">
    <property type="entry name" value="IF-2"/>
    <property type="match status" value="1"/>
</dbReference>
<dbReference type="PRINTS" id="PR00315">
    <property type="entry name" value="ELONGATNFCT"/>
</dbReference>
<dbReference type="SUPFAM" id="SSF52156">
    <property type="entry name" value="Initiation factor IF2/eIF5b, domain 3"/>
    <property type="match status" value="1"/>
</dbReference>
<dbReference type="SUPFAM" id="SSF52540">
    <property type="entry name" value="P-loop containing nucleoside triphosphate hydrolases"/>
    <property type="match status" value="1"/>
</dbReference>
<dbReference type="SUPFAM" id="SSF50447">
    <property type="entry name" value="Translation proteins"/>
    <property type="match status" value="1"/>
</dbReference>
<dbReference type="PROSITE" id="PS51722">
    <property type="entry name" value="G_TR_2"/>
    <property type="match status" value="1"/>
</dbReference>
<proteinExistence type="inferred from homology"/>
<name>IF2P_METM6</name>
<reference key="1">
    <citation type="submission" date="2007-10" db="EMBL/GenBank/DDBJ databases">
        <title>Complete sequence of Methanococcus maripaludis C6.</title>
        <authorList>
            <consortium name="US DOE Joint Genome Institute"/>
            <person name="Copeland A."/>
            <person name="Lucas S."/>
            <person name="Lapidus A."/>
            <person name="Barry K."/>
            <person name="Glavina del Rio T."/>
            <person name="Dalin E."/>
            <person name="Tice H."/>
            <person name="Pitluck S."/>
            <person name="Clum A."/>
            <person name="Schmutz J."/>
            <person name="Larimer F."/>
            <person name="Land M."/>
            <person name="Hauser L."/>
            <person name="Kyrpides N."/>
            <person name="Mikhailova N."/>
            <person name="Sieprawska-Lupa M."/>
            <person name="Whitman W.B."/>
            <person name="Richardson P."/>
        </authorList>
    </citation>
    <scope>NUCLEOTIDE SEQUENCE [LARGE SCALE GENOMIC DNA]</scope>
    <source>
        <strain>C6 / ATCC BAA-1332</strain>
    </source>
</reference>
<protein>
    <recommendedName>
        <fullName evidence="2">Probable translation initiation factor IF-2</fullName>
    </recommendedName>
</protein>
<sequence>MALRCPIVSVLGHVDHGKTSLLDKIRSTRVTQREAGGITQHIGASEIPINTIKKVSKDLLGLFKADLTIPGLLVIDTPGHEAFTSLRKRGGALADIAILVVDMNEGFKPQTIEAINILKQCKTPFIVAANKLDRVPGWNSKEGPFILNFNEKNQHPNAMTEFEIRLYENVIKHLNELGFDADLFSRVKDTTKTINVVPVSAMTGEGIPDLLVIISGLAQKFLEQKLALNVEGYAKGTVLELKEEKGLGKTIDAIIYDGIAKTGDFLVVGNPQGVLVSKIKALLKPKELDEMRDPKDKFKPSKQISAATGVKISAPDLDNVIAGSPLRIVPKDQIENAKAEVLQEVEEFTILTDDEGIIIKADTMGSLEALANELRKVKAKIKKAEVGDISKKDVIEASSYASTNPLNGLIISFNTKVLSDAKAEIEKSDVKLLEGRIIYKLVEEYEEWVKEMEELMKSDEINRLTKPAMIKILPNCIFRQKEPAVCGVEVLYGTLKIGSPLMSEDGKKLGYVKEIRDNQQENIKEAKVGMQVPVSIDGNIVLGRNAKENDILYVEVPEPEARKLHHEFRDELRGDEKEALSRYMELKQKIENNIFWGM</sequence>
<evidence type="ECO:0000250" key="1"/>
<evidence type="ECO:0000255" key="2">
    <source>
        <dbReference type="HAMAP-Rule" id="MF_00100"/>
    </source>
</evidence>
<gene>
    <name evidence="2" type="primary">infB</name>
    <name type="ordered locus">MmarC6_0669</name>
</gene>
<organism>
    <name type="scientific">Methanococcus maripaludis (strain C6 / ATCC BAA-1332)</name>
    <dbReference type="NCBI Taxonomy" id="444158"/>
    <lineage>
        <taxon>Archaea</taxon>
        <taxon>Methanobacteriati</taxon>
        <taxon>Methanobacteriota</taxon>
        <taxon>Methanomada group</taxon>
        <taxon>Methanococci</taxon>
        <taxon>Methanococcales</taxon>
        <taxon>Methanococcaceae</taxon>
        <taxon>Methanococcus</taxon>
    </lineage>
</organism>
<feature type="chain" id="PRO_1000093802" description="Probable translation initiation factor IF-2">
    <location>
        <begin position="1"/>
        <end position="598"/>
    </location>
</feature>
<feature type="domain" description="tr-type G">
    <location>
        <begin position="3"/>
        <end position="225"/>
    </location>
</feature>
<feature type="region of interest" description="G1" evidence="1">
    <location>
        <begin position="12"/>
        <end position="19"/>
    </location>
</feature>
<feature type="region of interest" description="G2" evidence="1">
    <location>
        <begin position="37"/>
        <end position="41"/>
    </location>
</feature>
<feature type="region of interest" description="G3" evidence="1">
    <location>
        <begin position="76"/>
        <end position="79"/>
    </location>
</feature>
<feature type="region of interest" description="G4" evidence="1">
    <location>
        <begin position="130"/>
        <end position="133"/>
    </location>
</feature>
<feature type="region of interest" description="G5" evidence="1">
    <location>
        <begin position="200"/>
        <end position="202"/>
    </location>
</feature>
<feature type="binding site" evidence="2">
    <location>
        <begin position="12"/>
        <end position="19"/>
    </location>
    <ligand>
        <name>GTP</name>
        <dbReference type="ChEBI" id="CHEBI:37565"/>
    </ligand>
</feature>
<feature type="binding site" evidence="2">
    <location>
        <begin position="76"/>
        <end position="80"/>
    </location>
    <ligand>
        <name>GTP</name>
        <dbReference type="ChEBI" id="CHEBI:37565"/>
    </ligand>
</feature>
<feature type="binding site" evidence="2">
    <location>
        <begin position="130"/>
        <end position="133"/>
    </location>
    <ligand>
        <name>GTP</name>
        <dbReference type="ChEBI" id="CHEBI:37565"/>
    </ligand>
</feature>
<comment type="function">
    <text evidence="2">Function in general translation initiation by promoting the binding of the formylmethionine-tRNA to ribosomes. Seems to function along with eIF-2.</text>
</comment>
<comment type="similarity">
    <text evidence="2">Belongs to the TRAFAC class translation factor GTPase superfamily. Classic translation factor GTPase family. IF-2 subfamily.</text>
</comment>